<organism>
    <name type="scientific">Campylobacter jejuni subsp. jejuni serotype O:6 (strain 81116 / NCTC 11828)</name>
    <dbReference type="NCBI Taxonomy" id="407148"/>
    <lineage>
        <taxon>Bacteria</taxon>
        <taxon>Pseudomonadati</taxon>
        <taxon>Campylobacterota</taxon>
        <taxon>Epsilonproteobacteria</taxon>
        <taxon>Campylobacterales</taxon>
        <taxon>Campylobacteraceae</taxon>
        <taxon>Campylobacter</taxon>
    </lineage>
</organism>
<feature type="chain" id="PRO_0000442732" description="Secreted flagellin C">
    <location>
        <begin position="1"/>
        <end position="249"/>
    </location>
</feature>
<proteinExistence type="evidence at protein level"/>
<sequence>MMISDATMMQQNYYLNNAQKASDKALENIAAVRAISGVDSANLAIADSLRSQSSTIDQGVANAYDAIGVLQIADASLTNISQSADRLNELSVKMNNAALNDSQKGMLRTEATRIQESINDSFNNATYNGKNVFQTMNFVVGSGTETTNLNPLATGGLSIDNQDSITNFMDQLGSLRSEIGSGINAITSNINASVQNSINSKAAENNLLNNDMAKNVNDFNANYLKENAAAFVAAQSNMQLQSKIANLLQ</sequence>
<reference key="1">
    <citation type="journal article" date="2007" name="J. Bacteriol.">
        <title>The complete genome sequence of Campylobacter jejuni strain 81116 (NCTC11828).</title>
        <authorList>
            <person name="Pearson B.M."/>
            <person name="Gaskin D.J.H."/>
            <person name="Segers R.P.A.M."/>
            <person name="Wells J.M."/>
            <person name="Nuijten P.J.M."/>
            <person name="van Vliet A.H.M."/>
        </authorList>
    </citation>
    <scope>NUCLEOTIDE SEQUENCE [LARGE SCALE GENOMIC DNA]</scope>
    <source>
        <strain>81116 / NCTC 11828</strain>
    </source>
</reference>
<reference key="2">
    <citation type="journal article" date="2017" name="Front. Microbiol.">
        <title>Importance of Campylobacter jejuni FliS and FliW in flagella biogenesis and flagellin secretion.</title>
        <authorList>
            <person name="Radomska K.A."/>
            <person name="Woesten M.M.S.M."/>
            <person name="Ordonez S.R."/>
            <person name="Wagenaar J.A."/>
            <person name="van Putten J.P.M."/>
        </authorList>
    </citation>
    <scope>INTERACTION WITH FLIS</scope>
    <scope>SUBUNIT</scope>
    <scope>SUBCELLULAR LOCATION</scope>
    <source>
        <strain>81116 / NCTC 11828</strain>
    </source>
</reference>
<dbReference type="EMBL" id="CP000814">
    <property type="protein sequence ID" value="ABV52286.1"/>
    <property type="molecule type" value="Genomic_DNA"/>
</dbReference>
<dbReference type="RefSeq" id="WP_002854849.1">
    <property type="nucleotide sequence ID" value="NC_009839.1"/>
</dbReference>
<dbReference type="SMR" id="P0DPD2"/>
<dbReference type="KEGG" id="cju:C8J_0687"/>
<dbReference type="HOGENOM" id="CLU_097077_0_0_7"/>
<dbReference type="GO" id="GO:0009288">
    <property type="term" value="C:bacterial-type flagellum"/>
    <property type="evidence" value="ECO:0007669"/>
    <property type="project" value="InterPro"/>
</dbReference>
<dbReference type="GO" id="GO:0005576">
    <property type="term" value="C:extracellular region"/>
    <property type="evidence" value="ECO:0007669"/>
    <property type="project" value="UniProtKB-SubCell"/>
</dbReference>
<dbReference type="GO" id="GO:0005198">
    <property type="term" value="F:structural molecule activity"/>
    <property type="evidence" value="ECO:0007669"/>
    <property type="project" value="InterPro"/>
</dbReference>
<dbReference type="Gene3D" id="1.20.1330.10">
    <property type="entry name" value="f41 fragment of flagellin, N-terminal domain"/>
    <property type="match status" value="1"/>
</dbReference>
<dbReference type="InterPro" id="IPR001492">
    <property type="entry name" value="Flagellin"/>
</dbReference>
<dbReference type="InterPro" id="IPR001029">
    <property type="entry name" value="Flagellin_N"/>
</dbReference>
<dbReference type="PANTHER" id="PTHR42792">
    <property type="entry name" value="FLAGELLIN"/>
    <property type="match status" value="1"/>
</dbReference>
<dbReference type="PANTHER" id="PTHR42792:SF2">
    <property type="entry name" value="FLAGELLIN"/>
    <property type="match status" value="1"/>
</dbReference>
<dbReference type="Pfam" id="PF00669">
    <property type="entry name" value="Flagellin_N"/>
    <property type="match status" value="1"/>
</dbReference>
<dbReference type="SUPFAM" id="SSF64518">
    <property type="entry name" value="Phase 1 flagellin"/>
    <property type="match status" value="1"/>
</dbReference>
<comment type="function">
    <text evidence="1">Might play a role in virulence (By similarity).</text>
</comment>
<comment type="subunit">
    <text evidence="2">Interacts with FliS (PubMed:28659885).</text>
</comment>
<comment type="subcellular location">
    <subcellularLocation>
        <location evidence="2">Secreted</location>
    </subcellularLocation>
    <text evidence="1">Probably secreted via the flagellar export apparatus (By similarity).</text>
</comment>
<protein>
    <recommendedName>
        <fullName>Secreted flagellin C</fullName>
    </recommendedName>
</protein>
<gene>
    <name type="primary">flaC</name>
    <name type="ordered locus">C8J_0687</name>
</gene>
<accession>P0DPD2</accession>
<keyword id="KW-0964">Secreted</keyword>
<name>FLAC_CAMJ8</name>
<evidence type="ECO:0000250" key="1">
    <source>
        <dbReference type="UniProtKB" id="P96747"/>
    </source>
</evidence>
<evidence type="ECO:0000269" key="2">
    <source>
    </source>
</evidence>